<reference key="1">
    <citation type="journal article" date="2009" name="J. Bacteriol.">
        <title>Complete genome sequence of Rhodobacter sphaeroides KD131.</title>
        <authorList>
            <person name="Lim S.-K."/>
            <person name="Kim S.J."/>
            <person name="Cha S.H."/>
            <person name="Oh Y.-K."/>
            <person name="Rhee H.-J."/>
            <person name="Kim M.-S."/>
            <person name="Lee J.K."/>
        </authorList>
    </citation>
    <scope>NUCLEOTIDE SEQUENCE [LARGE SCALE GENOMIC DNA]</scope>
    <source>
        <strain>KD131 / KCTC 12085</strain>
    </source>
</reference>
<keyword id="KW-0963">Cytoplasm</keyword>
<keyword id="KW-0378">Hydrolase</keyword>
<keyword id="KW-0694">RNA-binding</keyword>
<keyword id="KW-0820">tRNA-binding</keyword>
<dbReference type="EC" id="3.1.1.96" evidence="1"/>
<dbReference type="EMBL" id="CP001150">
    <property type="protein sequence ID" value="ACM00434.1"/>
    <property type="molecule type" value="Genomic_DNA"/>
</dbReference>
<dbReference type="RefSeq" id="WP_012643815.1">
    <property type="nucleotide sequence ID" value="NC_011963.1"/>
</dbReference>
<dbReference type="SMR" id="B9KPE1"/>
<dbReference type="GeneID" id="67446027"/>
<dbReference type="KEGG" id="rsk:RSKD131_0574"/>
<dbReference type="HOGENOM" id="CLU_076901_1_1_5"/>
<dbReference type="GO" id="GO:0005737">
    <property type="term" value="C:cytoplasm"/>
    <property type="evidence" value="ECO:0007669"/>
    <property type="project" value="UniProtKB-SubCell"/>
</dbReference>
<dbReference type="GO" id="GO:0051500">
    <property type="term" value="F:D-tyrosyl-tRNA(Tyr) deacylase activity"/>
    <property type="evidence" value="ECO:0007669"/>
    <property type="project" value="TreeGrafter"/>
</dbReference>
<dbReference type="GO" id="GO:0106026">
    <property type="term" value="F:Gly-tRNA(Ala) deacylase activity"/>
    <property type="evidence" value="ECO:0007669"/>
    <property type="project" value="UniProtKB-UniRule"/>
</dbReference>
<dbReference type="GO" id="GO:0043908">
    <property type="term" value="F:Ser(Gly)-tRNA(Ala) hydrolase activity"/>
    <property type="evidence" value="ECO:0007669"/>
    <property type="project" value="UniProtKB-UniRule"/>
</dbReference>
<dbReference type="GO" id="GO:0000049">
    <property type="term" value="F:tRNA binding"/>
    <property type="evidence" value="ECO:0007669"/>
    <property type="project" value="UniProtKB-UniRule"/>
</dbReference>
<dbReference type="GO" id="GO:0019478">
    <property type="term" value="P:D-amino acid catabolic process"/>
    <property type="evidence" value="ECO:0007669"/>
    <property type="project" value="UniProtKB-UniRule"/>
</dbReference>
<dbReference type="FunFam" id="3.50.80.10:FF:000001">
    <property type="entry name" value="D-aminoacyl-tRNA deacylase"/>
    <property type="match status" value="1"/>
</dbReference>
<dbReference type="Gene3D" id="3.50.80.10">
    <property type="entry name" value="D-tyrosyl-tRNA(Tyr) deacylase"/>
    <property type="match status" value="1"/>
</dbReference>
<dbReference type="HAMAP" id="MF_00518">
    <property type="entry name" value="Deacylase_Dtd"/>
    <property type="match status" value="1"/>
</dbReference>
<dbReference type="InterPro" id="IPR003732">
    <property type="entry name" value="Daa-tRNA_deacyls_DTD"/>
</dbReference>
<dbReference type="InterPro" id="IPR023509">
    <property type="entry name" value="DTD-like_sf"/>
</dbReference>
<dbReference type="NCBIfam" id="TIGR00256">
    <property type="entry name" value="D-aminoacyl-tRNA deacylase"/>
    <property type="match status" value="1"/>
</dbReference>
<dbReference type="PANTHER" id="PTHR10472:SF5">
    <property type="entry name" value="D-AMINOACYL-TRNA DEACYLASE 1"/>
    <property type="match status" value="1"/>
</dbReference>
<dbReference type="PANTHER" id="PTHR10472">
    <property type="entry name" value="D-TYROSYL-TRNA TYR DEACYLASE"/>
    <property type="match status" value="1"/>
</dbReference>
<dbReference type="Pfam" id="PF02580">
    <property type="entry name" value="Tyr_Deacylase"/>
    <property type="match status" value="1"/>
</dbReference>
<dbReference type="SUPFAM" id="SSF69500">
    <property type="entry name" value="DTD-like"/>
    <property type="match status" value="1"/>
</dbReference>
<accession>B9KPE1</accession>
<gene>
    <name evidence="1" type="primary">dtd</name>
    <name type="ordered locus">RSKD131_0574</name>
</gene>
<protein>
    <recommendedName>
        <fullName evidence="1">D-aminoacyl-tRNA deacylase</fullName>
        <shortName evidence="1">DTD</shortName>
        <ecNumber evidence="1">3.1.1.96</ecNumber>
    </recommendedName>
    <alternativeName>
        <fullName evidence="1">Gly-tRNA(Ala) deacylase</fullName>
    </alternativeName>
</protein>
<organism>
    <name type="scientific">Cereibacter sphaeroides (strain KD131 / KCTC 12085)</name>
    <name type="common">Rhodobacter sphaeroides</name>
    <dbReference type="NCBI Taxonomy" id="557760"/>
    <lineage>
        <taxon>Bacteria</taxon>
        <taxon>Pseudomonadati</taxon>
        <taxon>Pseudomonadota</taxon>
        <taxon>Alphaproteobacteria</taxon>
        <taxon>Rhodobacterales</taxon>
        <taxon>Paracoccaceae</taxon>
        <taxon>Cereibacter</taxon>
    </lineage>
</organism>
<sequence>MRALIQRVSEASVTVEGECLGEIGPGLLILVCAMQGDGEAQASALAARIAKLRIFKDEAGKMNRSVRDTGGAALVVSQFTLAADTSRGNRPGFSAAAPPADGERLYRQFAAEIAACGIPTATGRFGADMKVRLLNDGPVTIWMES</sequence>
<feature type="chain" id="PRO_1000146208" description="D-aminoacyl-tRNA deacylase">
    <location>
        <begin position="1"/>
        <end position="145"/>
    </location>
</feature>
<feature type="short sequence motif" description="Gly-cisPro motif, important for rejection of L-amino acids" evidence="1">
    <location>
        <begin position="137"/>
        <end position="138"/>
    </location>
</feature>
<name>DTD_CERSK</name>
<comment type="function">
    <text evidence="1">An aminoacyl-tRNA editing enzyme that deacylates mischarged D-aminoacyl-tRNAs. Also deacylates mischarged glycyl-tRNA(Ala), protecting cells against glycine mischarging by AlaRS. Acts via tRNA-based rather than protein-based catalysis; rejects L-amino acids rather than detecting D-amino acids in the active site. By recycling D-aminoacyl-tRNA to D-amino acids and free tRNA molecules, this enzyme counteracts the toxicity associated with the formation of D-aminoacyl-tRNA entities in vivo and helps enforce protein L-homochirality.</text>
</comment>
<comment type="catalytic activity">
    <reaction evidence="1">
        <text>glycyl-tRNA(Ala) + H2O = tRNA(Ala) + glycine + H(+)</text>
        <dbReference type="Rhea" id="RHEA:53744"/>
        <dbReference type="Rhea" id="RHEA-COMP:9657"/>
        <dbReference type="Rhea" id="RHEA-COMP:13640"/>
        <dbReference type="ChEBI" id="CHEBI:15377"/>
        <dbReference type="ChEBI" id="CHEBI:15378"/>
        <dbReference type="ChEBI" id="CHEBI:57305"/>
        <dbReference type="ChEBI" id="CHEBI:78442"/>
        <dbReference type="ChEBI" id="CHEBI:78522"/>
        <dbReference type="EC" id="3.1.1.96"/>
    </reaction>
</comment>
<comment type="catalytic activity">
    <reaction evidence="1">
        <text>a D-aminoacyl-tRNA + H2O = a tRNA + a D-alpha-amino acid + H(+)</text>
        <dbReference type="Rhea" id="RHEA:13953"/>
        <dbReference type="Rhea" id="RHEA-COMP:10123"/>
        <dbReference type="Rhea" id="RHEA-COMP:10124"/>
        <dbReference type="ChEBI" id="CHEBI:15377"/>
        <dbReference type="ChEBI" id="CHEBI:15378"/>
        <dbReference type="ChEBI" id="CHEBI:59871"/>
        <dbReference type="ChEBI" id="CHEBI:78442"/>
        <dbReference type="ChEBI" id="CHEBI:79333"/>
        <dbReference type="EC" id="3.1.1.96"/>
    </reaction>
</comment>
<comment type="subunit">
    <text evidence="1">Homodimer.</text>
</comment>
<comment type="subcellular location">
    <subcellularLocation>
        <location evidence="1">Cytoplasm</location>
    </subcellularLocation>
</comment>
<comment type="domain">
    <text evidence="1">A Gly-cisPro motif from one monomer fits into the active site of the other monomer to allow specific chiral rejection of L-amino acids.</text>
</comment>
<comment type="similarity">
    <text evidence="1">Belongs to the DTD family.</text>
</comment>
<evidence type="ECO:0000255" key="1">
    <source>
        <dbReference type="HAMAP-Rule" id="MF_00518"/>
    </source>
</evidence>
<proteinExistence type="inferred from homology"/>